<keyword id="KW-0378">Hydrolase</keyword>
<keyword id="KW-0479">Metal-binding</keyword>
<keyword id="KW-0482">Metalloprotease</keyword>
<keyword id="KW-0645">Protease</keyword>
<keyword id="KW-0862">Zinc</keyword>
<reference key="1">
    <citation type="journal article" date="2014" name="Stand. Genomic Sci.">
        <title>Complete genome sequence of Anabaena variabilis ATCC 29413.</title>
        <authorList>
            <person name="Thiel T."/>
            <person name="Pratte B.S."/>
            <person name="Zhong J."/>
            <person name="Goodwin L."/>
            <person name="Copeland A."/>
            <person name="Lucas S."/>
            <person name="Han C."/>
            <person name="Pitluck S."/>
            <person name="Land M.L."/>
            <person name="Kyrpides N.C."/>
            <person name="Woyke T."/>
        </authorList>
    </citation>
    <scope>NUCLEOTIDE SEQUENCE [LARGE SCALE GENOMIC DNA]</scope>
    <source>
        <strain>ATCC 29413 / PCC 7937</strain>
    </source>
</reference>
<accession>Q3MGT8</accession>
<name>Y172_TRIV2</name>
<feature type="chain" id="PRO_1000089789" description="UPF0758 protein Ava_0172">
    <location>
        <begin position="1"/>
        <end position="243"/>
    </location>
</feature>
<feature type="domain" description="MPN" evidence="1">
    <location>
        <begin position="113"/>
        <end position="235"/>
    </location>
</feature>
<feature type="short sequence motif" description="JAMM motif" evidence="1">
    <location>
        <begin position="184"/>
        <end position="197"/>
    </location>
</feature>
<feature type="binding site" evidence="1">
    <location>
        <position position="184"/>
    </location>
    <ligand>
        <name>Zn(2+)</name>
        <dbReference type="ChEBI" id="CHEBI:29105"/>
        <note>catalytic</note>
    </ligand>
</feature>
<feature type="binding site" evidence="1">
    <location>
        <position position="186"/>
    </location>
    <ligand>
        <name>Zn(2+)</name>
        <dbReference type="ChEBI" id="CHEBI:29105"/>
        <note>catalytic</note>
    </ligand>
</feature>
<feature type="binding site" evidence="1">
    <location>
        <position position="197"/>
    </location>
    <ligand>
        <name>Zn(2+)</name>
        <dbReference type="ChEBI" id="CHEBI:29105"/>
        <note>catalytic</note>
    </ligand>
</feature>
<organism>
    <name type="scientific">Trichormus variabilis (strain ATCC 29413 / PCC 7937)</name>
    <name type="common">Anabaena variabilis</name>
    <dbReference type="NCBI Taxonomy" id="240292"/>
    <lineage>
        <taxon>Bacteria</taxon>
        <taxon>Bacillati</taxon>
        <taxon>Cyanobacteriota</taxon>
        <taxon>Cyanophyceae</taxon>
        <taxon>Nostocales</taxon>
        <taxon>Nostocaceae</taxon>
        <taxon>Trichormus</taxon>
    </lineage>
</organism>
<dbReference type="EMBL" id="CP000117">
    <property type="protein sequence ID" value="ABA19798.1"/>
    <property type="molecule type" value="Genomic_DNA"/>
</dbReference>
<dbReference type="SMR" id="Q3MGT8"/>
<dbReference type="STRING" id="240292.Ava_0172"/>
<dbReference type="KEGG" id="ava:Ava_0172"/>
<dbReference type="eggNOG" id="COG2003">
    <property type="taxonomic scope" value="Bacteria"/>
</dbReference>
<dbReference type="HOGENOM" id="CLU_073529_0_2_3"/>
<dbReference type="Proteomes" id="UP000002533">
    <property type="component" value="Chromosome"/>
</dbReference>
<dbReference type="GO" id="GO:0003677">
    <property type="term" value="F:DNA binding"/>
    <property type="evidence" value="ECO:0007669"/>
    <property type="project" value="InterPro"/>
</dbReference>
<dbReference type="GO" id="GO:0046872">
    <property type="term" value="F:metal ion binding"/>
    <property type="evidence" value="ECO:0007669"/>
    <property type="project" value="UniProtKB-KW"/>
</dbReference>
<dbReference type="GO" id="GO:0008237">
    <property type="term" value="F:metallopeptidase activity"/>
    <property type="evidence" value="ECO:0007669"/>
    <property type="project" value="UniProtKB-KW"/>
</dbReference>
<dbReference type="GO" id="GO:0006281">
    <property type="term" value="P:DNA repair"/>
    <property type="evidence" value="ECO:0007669"/>
    <property type="project" value="InterPro"/>
</dbReference>
<dbReference type="GO" id="GO:0006508">
    <property type="term" value="P:proteolysis"/>
    <property type="evidence" value="ECO:0007669"/>
    <property type="project" value="UniProtKB-KW"/>
</dbReference>
<dbReference type="CDD" id="cd08071">
    <property type="entry name" value="MPN_DUF2466"/>
    <property type="match status" value="1"/>
</dbReference>
<dbReference type="Gene3D" id="3.40.140.10">
    <property type="entry name" value="Cytidine Deaminase, domain 2"/>
    <property type="match status" value="1"/>
</dbReference>
<dbReference type="InterPro" id="IPR003583">
    <property type="entry name" value="Hlx-hairpin-Hlx_DNA-bd_motif"/>
</dbReference>
<dbReference type="InterPro" id="IPR037518">
    <property type="entry name" value="MPN"/>
</dbReference>
<dbReference type="InterPro" id="IPR025657">
    <property type="entry name" value="RadC_JAB"/>
</dbReference>
<dbReference type="InterPro" id="IPR001405">
    <property type="entry name" value="UPF0758"/>
</dbReference>
<dbReference type="InterPro" id="IPR020891">
    <property type="entry name" value="UPF0758_CS"/>
</dbReference>
<dbReference type="InterPro" id="IPR046778">
    <property type="entry name" value="UPF0758_N"/>
</dbReference>
<dbReference type="NCBIfam" id="NF000642">
    <property type="entry name" value="PRK00024.1"/>
    <property type="match status" value="1"/>
</dbReference>
<dbReference type="NCBIfam" id="TIGR00608">
    <property type="entry name" value="radc"/>
    <property type="match status" value="1"/>
</dbReference>
<dbReference type="PANTHER" id="PTHR30471">
    <property type="entry name" value="DNA REPAIR PROTEIN RADC"/>
    <property type="match status" value="1"/>
</dbReference>
<dbReference type="PANTHER" id="PTHR30471:SF3">
    <property type="entry name" value="UPF0758 PROTEIN YEES-RELATED"/>
    <property type="match status" value="1"/>
</dbReference>
<dbReference type="Pfam" id="PF04002">
    <property type="entry name" value="RadC"/>
    <property type="match status" value="1"/>
</dbReference>
<dbReference type="Pfam" id="PF20582">
    <property type="entry name" value="UPF0758_N"/>
    <property type="match status" value="1"/>
</dbReference>
<dbReference type="SMART" id="SM00278">
    <property type="entry name" value="HhH1"/>
    <property type="match status" value="1"/>
</dbReference>
<dbReference type="PROSITE" id="PS50249">
    <property type="entry name" value="MPN"/>
    <property type="match status" value="1"/>
</dbReference>
<dbReference type="PROSITE" id="PS01302">
    <property type="entry name" value="UPF0758"/>
    <property type="match status" value="1"/>
</dbReference>
<gene>
    <name type="ordered locus">Ava_0172</name>
</gene>
<protein>
    <recommendedName>
        <fullName>UPF0758 protein Ava_0172</fullName>
    </recommendedName>
</protein>
<proteinExistence type="inferred from homology"/>
<evidence type="ECO:0000255" key="1">
    <source>
        <dbReference type="PROSITE-ProRule" id="PRU01182"/>
    </source>
</evidence>
<evidence type="ECO:0000305" key="2"/>
<comment type="similarity">
    <text evidence="2">Belongs to the UPF0758 family.</text>
</comment>
<sequence length="243" mass="26475">MTYCLRIADIPTNERPRERLMTHGPKVLATAELIAILLGTGQGPGKLSAVGLGQYLLQELGKNQRDPLAVLREVTPAELMQIPGIGPAKATSILAAVELGKRTFQFRPLDKTPIDSPVAAVAALSQDLMWQNQERFAVLLLDVKNRLLGTQVITIGTATETLASPREIFREIIRQGATRTIVAHNHPSGNVEPSPEDIELTRQLLAGAQLLGIPLLDHLILGNGNHQSLREVTTLWNDYPQGD</sequence>